<dbReference type="EC" id="2.3.1.-" evidence="1"/>
<dbReference type="EC" id="3.1.2.22" evidence="1"/>
<dbReference type="EMBL" id="EF204938">
    <property type="protein sequence ID" value="ABM91779.1"/>
    <property type="molecule type" value="mRNA"/>
</dbReference>
<dbReference type="RefSeq" id="NP_001076064.1">
    <property type="nucleotide sequence ID" value="NM_001082595.1"/>
</dbReference>
<dbReference type="SMR" id="A2TJ54"/>
<dbReference type="STRING" id="9940.ENSOARP00000017190"/>
<dbReference type="GlyCosmos" id="A2TJ54">
    <property type="glycosylation" value="8 sites, No reported glycans"/>
</dbReference>
<dbReference type="PaxDb" id="9940-ENSOARP00000017190"/>
<dbReference type="GeneID" id="100034668"/>
<dbReference type="KEGG" id="oas:100034668"/>
<dbReference type="CTD" id="1203"/>
<dbReference type="eggNOG" id="ENOG502QPQ5">
    <property type="taxonomic scope" value="Eukaryota"/>
</dbReference>
<dbReference type="OrthoDB" id="10005881at2759"/>
<dbReference type="Proteomes" id="UP000002356">
    <property type="component" value="Unplaced"/>
</dbReference>
<dbReference type="GO" id="GO:0005829">
    <property type="term" value="C:cytosol"/>
    <property type="evidence" value="ECO:0007669"/>
    <property type="project" value="GOC"/>
</dbReference>
<dbReference type="GO" id="GO:0005765">
    <property type="term" value="C:lysosomal membrane"/>
    <property type="evidence" value="ECO:0007669"/>
    <property type="project" value="TreeGrafter"/>
</dbReference>
<dbReference type="GO" id="GO:0005764">
    <property type="term" value="C:lysosome"/>
    <property type="evidence" value="ECO:0000250"/>
    <property type="project" value="UniProtKB"/>
</dbReference>
<dbReference type="GO" id="GO:0005537">
    <property type="term" value="F:D-mannose binding"/>
    <property type="evidence" value="ECO:0000250"/>
    <property type="project" value="UniProtKB"/>
</dbReference>
<dbReference type="GO" id="GO:0016798">
    <property type="term" value="F:hydrolase activity, acting on glycosyl bonds"/>
    <property type="evidence" value="ECO:0007669"/>
    <property type="project" value="TreeGrafter"/>
</dbReference>
<dbReference type="GO" id="GO:0016740">
    <property type="term" value="F:transferase activity"/>
    <property type="evidence" value="ECO:0007669"/>
    <property type="project" value="UniProtKB-KW"/>
</dbReference>
<dbReference type="GO" id="GO:0070085">
    <property type="term" value="P:glycosylation"/>
    <property type="evidence" value="ECO:0000250"/>
    <property type="project" value="UniProtKB"/>
</dbReference>
<dbReference type="GO" id="GO:0007040">
    <property type="term" value="P:lysosome organization"/>
    <property type="evidence" value="ECO:0007669"/>
    <property type="project" value="TreeGrafter"/>
</dbReference>
<dbReference type="GO" id="GO:1904426">
    <property type="term" value="P:positive regulation of GTP binding"/>
    <property type="evidence" value="ECO:0000250"/>
    <property type="project" value="UniProtKB"/>
</dbReference>
<dbReference type="GO" id="GO:0042147">
    <property type="term" value="P:retrograde transport, endosome to Golgi"/>
    <property type="evidence" value="ECO:0000250"/>
    <property type="project" value="UniProtKB"/>
</dbReference>
<dbReference type="GO" id="GO:0006465">
    <property type="term" value="P:signal peptide processing"/>
    <property type="evidence" value="ECO:0000250"/>
    <property type="project" value="UniProtKB"/>
</dbReference>
<dbReference type="InterPro" id="IPR026138">
    <property type="entry name" value="CLN5"/>
</dbReference>
<dbReference type="PANTHER" id="PTHR15380:SF2">
    <property type="entry name" value="CEROID-LIPOFUSCINOSIS NEURONAL PROTEIN 5"/>
    <property type="match status" value="1"/>
</dbReference>
<dbReference type="PANTHER" id="PTHR15380">
    <property type="entry name" value="CEROID-LIPOFUSCINOSIS, NEURONAL 5"/>
    <property type="match status" value="1"/>
</dbReference>
<dbReference type="Pfam" id="PF15014">
    <property type="entry name" value="CLN5"/>
    <property type="match status" value="1"/>
</dbReference>
<feature type="chain" id="PRO_0000330472" description="Bis(monoacylglycero)phosphate synthase CLN5">
    <location>
        <begin position="1"/>
        <end position="361"/>
    </location>
</feature>
<feature type="chain" id="PRO_0000438011" description="Bis(monoacylglycero)phosphate synthase CLN5, secreted form">
    <location>
        <begin position="46"/>
        <end position="361"/>
    </location>
</feature>
<feature type="topological domain" description="Cytoplasmic" evidence="1">
    <location>
        <begin position="1"/>
        <end position="30"/>
    </location>
</feature>
<feature type="transmembrane region" description="Helical; Signal-anchor for type II membrane protein" evidence="3">
    <location>
        <begin position="31"/>
        <end position="48"/>
    </location>
</feature>
<feature type="topological domain" description="Lumenal" evidence="1">
    <location>
        <begin position="49"/>
        <end position="361"/>
    </location>
</feature>
<feature type="region of interest" description="Disordered" evidence="4">
    <location>
        <begin position="1"/>
        <end position="24"/>
    </location>
</feature>
<feature type="region of interest" description="Membrane-anchoring" evidence="1">
    <location>
        <begin position="306"/>
        <end position="345"/>
    </location>
</feature>
<feature type="compositionally biased region" description="Gly residues" evidence="4">
    <location>
        <begin position="1"/>
        <end position="21"/>
    </location>
</feature>
<feature type="active site" description="Proton acceptor" evidence="1">
    <location>
        <position position="119"/>
    </location>
</feature>
<feature type="active site" description="Nucleophile; Acyl-thioester intermediate" evidence="1">
    <location>
        <position position="233"/>
    </location>
</feature>
<feature type="site" description="Cleavage; by SPPL3" evidence="1">
    <location>
        <begin position="45"/>
        <end position="46"/>
    </location>
</feature>
<feature type="glycosylation site" description="N-linked (GlcNAc...) asparagine" evidence="3">
    <location>
        <position position="132"/>
    </location>
</feature>
<feature type="glycosylation site" description="N-linked (GlcNAc...) asparagine" evidence="3">
    <location>
        <position position="145"/>
    </location>
</feature>
<feature type="glycosylation site" description="N-linked (GlcNAc...) asparagine" evidence="3">
    <location>
        <position position="180"/>
    </location>
</feature>
<feature type="glycosylation site" description="N-linked (GlcNAc...) asparagine" evidence="3">
    <location>
        <position position="205"/>
    </location>
</feature>
<feature type="glycosylation site" description="N-linked (GlcNAc...) asparagine" evidence="3">
    <location>
        <position position="257"/>
    </location>
</feature>
<feature type="glycosylation site" description="N-linked (GlcNAc...) asparagine" evidence="3">
    <location>
        <position position="273"/>
    </location>
</feature>
<feature type="glycosylation site" description="N-linked (GlcNAc...) asparagine" evidence="3">
    <location>
        <position position="283"/>
    </location>
</feature>
<feature type="glycosylation site" description="N-linked (GlcNAc...) asparagine" evidence="3">
    <location>
        <position position="355"/>
    </location>
</feature>
<feature type="disulfide bond" evidence="1">
    <location>
        <begin position="72"/>
        <end position="161"/>
    </location>
</feature>
<feature type="disulfide bond" evidence="1">
    <location>
        <begin position="79"/>
        <end position="167"/>
    </location>
</feature>
<reference key="1">
    <citation type="journal article" date="2008" name="Neurobiol. Dis.">
        <title>A new large animal model of CLN5 neuronal ceroid lipofuscinosis in Borderdale sheep is caused by a nucleotide substitution at a consensus splice site (c.571+1G&gt;&gt;&gt;A) leading to excision of exon 3.</title>
        <authorList>
            <person name="Frugier T."/>
            <person name="Mitchell N.L."/>
            <person name="Tammen I."/>
            <person name="Houweling P.J."/>
            <person name="Arthur D.G."/>
            <person name="Kay G.W."/>
            <person name="van Diggelen O.P."/>
            <person name="Jolly R.D."/>
            <person name="Palmer D.N."/>
        </authorList>
    </citation>
    <scope>NUCLEOTIDE SEQUENCE [MRNA]</scope>
</reference>
<accession>A2TJ54</accession>
<comment type="function">
    <molecule>Bis(monoacylglycero)phosphate synthase CLN5, secreted form</molecule>
    <text evidence="1">Catalyzes the synthesis of bis(monoacylglycero)phosphate (BMP) via transacylation of 2 molecules of lysophosphatidylglycerol (LPG). BMP also known as lysobisphosphatidic acid plays a key role in the formation of intraluminal vesicles and in maintaining intracellular cholesterol homeostasis. Can use only LPG as the exclusive lysophospholipid acyl donor for base exchange and displays BMP synthase activity towards various LPGs (LPG 14:0, LPG 16:0, LPG 18:0, LPG 18:1) with a higher preference for longer chain lengths. Plays a role in influencing the retrograde trafficking of lysosomal sorting receptors SORT1 and IGF2R from the endosomes to the trans-Golgi network by controlling the recruitment of retromer complex to the endosomal membrane. Regulates the localization and activation of RAB7A which is required to recruit the retromer complex to the endosomal membrane.</text>
</comment>
<comment type="function">
    <text evidence="1">Exhibits palmitoyl protein thioesterase (S-depalmitoylation) activity in vitro and most likely plays a role in protein S-depalmitoylation.</text>
</comment>
<comment type="catalytic activity">
    <reaction evidence="1">
        <text>S-hexadecanoyl-L-cysteinyl-[protein] + H2O = L-cysteinyl-[protein] + hexadecanoate + H(+)</text>
        <dbReference type="Rhea" id="RHEA:19233"/>
        <dbReference type="Rhea" id="RHEA-COMP:10131"/>
        <dbReference type="Rhea" id="RHEA-COMP:11032"/>
        <dbReference type="ChEBI" id="CHEBI:7896"/>
        <dbReference type="ChEBI" id="CHEBI:15377"/>
        <dbReference type="ChEBI" id="CHEBI:15378"/>
        <dbReference type="ChEBI" id="CHEBI:29950"/>
        <dbReference type="ChEBI" id="CHEBI:74151"/>
        <dbReference type="EC" id="3.1.2.22"/>
    </reaction>
    <physiologicalReaction direction="left-to-right" evidence="1">
        <dbReference type="Rhea" id="RHEA:19234"/>
    </physiologicalReaction>
</comment>
<comment type="catalytic activity">
    <molecule>Bis(monoacylglycero)phosphate synthase CLN5, secreted form</molecule>
    <reaction evidence="1">
        <text>2 1-acyl-sn-glycero-3-phospho-(1'-sn-glycerol) = 1-acyl-sn-glycero-3-phospho-(3'-acyl-sn-1'-glycerol) + sn-glycero-3-phospho-(1'-sn-glycerol)</text>
        <dbReference type="Rhea" id="RHEA:77619"/>
        <dbReference type="ChEBI" id="CHEBI:64717"/>
        <dbReference type="ChEBI" id="CHEBI:64840"/>
        <dbReference type="ChEBI" id="CHEBI:232628"/>
    </reaction>
    <physiologicalReaction direction="left-to-right" evidence="1">
        <dbReference type="Rhea" id="RHEA:77620"/>
    </physiologicalReaction>
</comment>
<comment type="catalytic activity">
    <molecule>Bis(monoacylglycero)phosphate synthase CLN5, secreted form</molecule>
    <reaction evidence="1">
        <text>2 1-(9Z-octadecenoyl)-sn-glycero-3-phospho-(1'-sn-glycerol) = 1-(9Z-octadecenoyl)-sn-glycero-3-phospho-(3'-(9Z-octadecenoyl)-1'-sn-glycerol) + sn-glycero-3-phospho-(1'-sn-glycerol)</text>
        <dbReference type="Rhea" id="RHEA:77599"/>
        <dbReference type="ChEBI" id="CHEBI:64717"/>
        <dbReference type="ChEBI" id="CHEBI:72828"/>
        <dbReference type="ChEBI" id="CHEBI:232637"/>
    </reaction>
    <physiologicalReaction direction="left-to-right" evidence="1">
        <dbReference type="Rhea" id="RHEA:77600"/>
    </physiologicalReaction>
</comment>
<comment type="catalytic activity">
    <molecule>Bis(monoacylglycero)phosphate synthase CLN5, secreted form</molecule>
    <reaction evidence="1">
        <text>2 1-octadecanoyl-sn-glycero-3-phospho-(1'-sn-glycerol) = 1-octadecanoyl-sn-glycero-3-phospho-(3'-octadecanoyl-1'-sn-glycerol) + sn-glycero-3-phospho-(1'-sn-glycerol)</text>
        <dbReference type="Rhea" id="RHEA:77603"/>
        <dbReference type="ChEBI" id="CHEBI:64717"/>
        <dbReference type="ChEBI" id="CHEBI:72827"/>
        <dbReference type="ChEBI" id="CHEBI:232638"/>
    </reaction>
    <physiologicalReaction direction="left-to-right" evidence="1">
        <dbReference type="Rhea" id="RHEA:77604"/>
    </physiologicalReaction>
</comment>
<comment type="catalytic activity">
    <molecule>Bis(monoacylglycero)phosphate synthase CLN5, secreted form</molecule>
    <reaction evidence="1">
        <text>2 1-hexadecanoyl-sn-glycero-3-phospho-(1'-sn-glycerol) = 1-hexadecanoyl-sn-glycero-3-phospho-(3'-hexadecanoyl-1'-sn-glycerol) + sn-glycero-3-phospho-(1'-sn-glycerol)</text>
        <dbReference type="Rhea" id="RHEA:77607"/>
        <dbReference type="ChEBI" id="CHEBI:64717"/>
        <dbReference type="ChEBI" id="CHEBI:75158"/>
        <dbReference type="ChEBI" id="CHEBI:232639"/>
    </reaction>
    <physiologicalReaction direction="left-to-right" evidence="1">
        <dbReference type="Rhea" id="RHEA:77608"/>
    </physiologicalReaction>
</comment>
<comment type="catalytic activity">
    <molecule>Bis(monoacylglycero)phosphate synthase CLN5, secreted form</molecule>
    <reaction evidence="1">
        <text>2 1-tetradecanoyl-sn-glycero-3-phospho-(1'-sn-glycerol) = 1-tetradecanoyl-sn-glycero-3-phospho-(3'-tetradecanoyl-1'-sn-glycerol) + sn-glycero-3-phospho-(1'-sn-glycerol)</text>
        <dbReference type="Rhea" id="RHEA:77611"/>
        <dbReference type="ChEBI" id="CHEBI:64717"/>
        <dbReference type="ChEBI" id="CHEBI:72826"/>
        <dbReference type="ChEBI" id="CHEBI:232640"/>
    </reaction>
    <physiologicalReaction direction="left-to-right" evidence="1">
        <dbReference type="Rhea" id="RHEA:77612"/>
    </physiologicalReaction>
</comment>
<comment type="subunit">
    <text evidence="1 2">Multimer. Interacts with SORT1, RAB5A and RAB7A. Interacts with PPT1, TPP1, CLN3, CLN6, CLN8, ATP5F1A and ATP5F1B.</text>
</comment>
<comment type="subcellular location">
    <molecule>Bis(monoacylglycero)phosphate synthase CLN5, secreted form</molecule>
    <subcellularLocation>
        <location evidence="1">Lysosome</location>
    </subcellularLocation>
</comment>
<comment type="subcellular location">
    <molecule>Bis(monoacylglycero)phosphate synthase CLN5</molecule>
    <subcellularLocation>
        <location evidence="1">Membrane</location>
        <topology evidence="1">Single-pass type II membrane protein</topology>
    </subcellularLocation>
    <text evidence="1">An amphipathic anchor region facilitates its association with the membrane.</text>
</comment>
<comment type="PTM">
    <text evidence="1">N-glycosylated with both high mannose and complex type sugars. Glycosylation is important for proper folding and trafficking to the lysosomes.</text>
</comment>
<comment type="PTM">
    <molecule>Bis(monoacylglycero)phosphate synthase CLN5</molecule>
    <text evidence="1">The type II membrane signal anchor is proteolytically cleaved to produce a mature form that is transported to the lysosomes (Bis(monoacylglycero)phosphate synthase CLN5, secreted form).</text>
</comment>
<comment type="PTM">
    <text evidence="1">Can undergo proteolytic cleavage at the C-terminus, probably by a cysteine protease and may involve the removal of approximately 10-15 residues from the C-terminal end.</text>
</comment>
<comment type="disease">
    <text>Defects in CLN5 are the cause of neuronal ceroid lipofuscinosis (NCL). NCL is characterized by brain atrophy and the accumulation of lysosome derived fluorescent storage bodies in neurons and most other cells. NCL is found in New Zealand Borderdale sheep.</text>
</comment>
<comment type="similarity">
    <text evidence="5">Belongs to the CLN5 family.</text>
</comment>
<organism>
    <name type="scientific">Ovis aries</name>
    <name type="common">Sheep</name>
    <dbReference type="NCBI Taxonomy" id="9940"/>
    <lineage>
        <taxon>Eukaryota</taxon>
        <taxon>Metazoa</taxon>
        <taxon>Chordata</taxon>
        <taxon>Craniata</taxon>
        <taxon>Vertebrata</taxon>
        <taxon>Euteleostomi</taxon>
        <taxon>Mammalia</taxon>
        <taxon>Eutheria</taxon>
        <taxon>Laurasiatheria</taxon>
        <taxon>Artiodactyla</taxon>
        <taxon>Ruminantia</taxon>
        <taxon>Pecora</taxon>
        <taxon>Bovidae</taxon>
        <taxon>Caprinae</taxon>
        <taxon>Ovis</taxon>
    </lineage>
</organism>
<evidence type="ECO:0000250" key="1">
    <source>
        <dbReference type="UniProtKB" id="O75503"/>
    </source>
</evidence>
<evidence type="ECO:0000250" key="2">
    <source>
        <dbReference type="UniProtKB" id="Q3UMW8"/>
    </source>
</evidence>
<evidence type="ECO:0000255" key="3"/>
<evidence type="ECO:0000256" key="4">
    <source>
        <dbReference type="SAM" id="MobiDB-lite"/>
    </source>
</evidence>
<evidence type="ECO:0000305" key="5"/>
<name>CLN5_SHEEP</name>
<keyword id="KW-1015">Disulfide bond</keyword>
<keyword id="KW-0325">Glycoprotein</keyword>
<keyword id="KW-0378">Hydrolase</keyword>
<keyword id="KW-0458">Lysosome</keyword>
<keyword id="KW-0472">Membrane</keyword>
<keyword id="KW-0523">Neurodegeneration</keyword>
<keyword id="KW-0525">Neuronal ceroid lipofuscinosis</keyword>
<keyword id="KW-1185">Reference proteome</keyword>
<keyword id="KW-0735">Signal-anchor</keyword>
<keyword id="KW-0808">Transferase</keyword>
<keyword id="KW-0812">Transmembrane</keyword>
<keyword id="KW-1133">Transmembrane helix</keyword>
<proteinExistence type="evidence at transcript level"/>
<protein>
    <recommendedName>
        <fullName evidence="1">Bis(monoacylglycero)phosphate synthase CLN5</fullName>
        <shortName>BMP synthase CLN5</shortName>
        <ecNumber evidence="1">2.3.1.-</ecNumber>
    </recommendedName>
    <alternativeName>
        <fullName>Ceroid-lipofuscinosis neuronal protein 5</fullName>
        <shortName>Protein CLN5</shortName>
    </alternativeName>
    <alternativeName>
        <fullName>Palmitoyl protein thioesterase CLN5</fullName>
        <ecNumber evidence="1">3.1.2.22</ecNumber>
    </alternativeName>
    <alternativeName>
        <fullName>S-depalmitoylase CLN5</fullName>
    </alternativeName>
    <component>
        <recommendedName>
            <fullName>Bis(monoacylglycero)phosphate synthase CLN5, secreted form</fullName>
        </recommendedName>
    </component>
</protein>
<gene>
    <name type="primary">CLN5</name>
    <name evidence="1" type="synonym">BMPS</name>
</gene>
<sequence length="361" mass="41315">MAQAGGAGAGAWGRRGAGAGAGPERAPWRWAPALLWLAAATAAAAAAGDPSRRQWPVPYKRFSFRPEPDPYCQAKYTFCPTGSPIPVMKDDDVIEVFRLQAPVWEFKYGDLLGHLKIMHDAIGFRSTLTEKNYTMEWYELFQLGNCTFPHLRPEMNAPFWCNQGAACFFEGIDDNHWKENGTLVLVATISGGMFNKMAKWVKQDNETGIYYETWTVQASPKKEAEKWFESYDCSKFVLRTYEKLAELGADFKKIETNYTRIFLYSGEPTYLGNETSVFGPTGNKTLALAIKKFYYPFKPHLSTKEFLLSLLQIFDAVVIHREFYLFYNFEYWFLPMKSPFIKITYEEIPLPNRKNRTLSGL</sequence>